<keyword id="KW-1185">Reference proteome</keyword>
<keyword id="KW-0716">Sensory transduction</keyword>
<gene>
    <name type="primary">Dar</name>
</gene>
<name>ARRD_RAT</name>
<reference key="1">
    <citation type="journal article" date="1994" name="J. Biol. Chem.">
        <title>Cone arrestin identified by targeting expression of a functional family.</title>
        <authorList>
            <person name="Craft C.M."/>
            <person name="Whitmore D.H."/>
            <person name="Wiechmann A.F."/>
        </authorList>
    </citation>
    <scope>NUCLEOTIDE SEQUENCE [MRNA]</scope>
    <source>
        <strain>Sprague-Dawley</strain>
        <tissue>Pineal gland</tissue>
    </source>
</reference>
<proteinExistence type="evidence at transcript level"/>
<organism>
    <name type="scientific">Rattus norvegicus</name>
    <name type="common">Rat</name>
    <dbReference type="NCBI Taxonomy" id="10116"/>
    <lineage>
        <taxon>Eukaryota</taxon>
        <taxon>Metazoa</taxon>
        <taxon>Chordata</taxon>
        <taxon>Craniata</taxon>
        <taxon>Vertebrata</taxon>
        <taxon>Euteleostomi</taxon>
        <taxon>Mammalia</taxon>
        <taxon>Eutheria</taxon>
        <taxon>Euarchontoglires</taxon>
        <taxon>Glires</taxon>
        <taxon>Rodentia</taxon>
        <taxon>Myomorpha</taxon>
        <taxon>Muroidea</taxon>
        <taxon>Muridae</taxon>
        <taxon>Murinae</taxon>
        <taxon>Rattus</taxon>
    </lineage>
</organism>
<dbReference type="EMBL" id="U03629">
    <property type="protein sequence ID" value="AAA17553.1"/>
    <property type="molecule type" value="mRNA"/>
</dbReference>
<dbReference type="PIR" id="I70114">
    <property type="entry name" value="I70114"/>
</dbReference>
<dbReference type="SMR" id="P36577"/>
<dbReference type="InParanoid" id="P36577"/>
<dbReference type="Proteomes" id="UP000002494">
    <property type="component" value="Unplaced"/>
</dbReference>
<accession>P36577</accession>
<feature type="chain" id="PRO_0000205209" description="Arrestin-D">
    <location>
        <begin position="1" status="less than"/>
        <end position="71"/>
    </location>
</feature>
<feature type="non-terminal residue">
    <location>
        <position position="1"/>
    </location>
</feature>
<protein>
    <recommendedName>
        <fullName>Arrestin-D</fullName>
    </recommendedName>
</protein>
<evidence type="ECO:0000305" key="1"/>
<comment type="tissue specificity">
    <text>Adrenal, cerebral cortex, heart, liver, lung, pituitary and testis.</text>
</comment>
<comment type="similarity">
    <text evidence="1">Belongs to the arrestin family.</text>
</comment>
<sequence length="71" mass="7755">LKHEDTNLSVSLTDSSVVSLYSGTVLFKSMHTLPTNARCPNLSVISATSGMSQCELSQSSMPWWCRSLVFS</sequence>